<sequence length="143" mass="16320">MGLMKKFRDYFLEEDYEDYEEEYEAPQQEEEALPLKTANKTNVVSLQSVQKSAKVVLAEPRVYAEAQEIADHLKSRRAVIVNLQRIQHEQAKRIVDFLSGTVYAIGGDIQQVGTKIFLCTPENVDVSGAISLDGEDDRPMKRW</sequence>
<comment type="function">
    <text evidence="1">Cell division protein that is part of the divisome complex and is recruited early to the Z-ring. Probably stimulates Z-ring formation, perhaps through the cross-linking of FtsZ protofilaments. Its function overlaps with FtsA.</text>
</comment>
<comment type="subunit">
    <text evidence="1">Homodimer. Interacts with FtsZ.</text>
</comment>
<comment type="subcellular location">
    <subcellularLocation>
        <location evidence="1">Cytoplasm</location>
    </subcellularLocation>
    <text evidence="1">Localizes to the division site, in a FtsZ-dependent manner.</text>
</comment>
<comment type="similarity">
    <text evidence="1">Belongs to the SepF family.</text>
</comment>
<comment type="sequence caution" evidence="2">
    <conflict type="erroneous initiation">
        <sequence resource="EMBL-CDS" id="ABO66375"/>
    </conflict>
</comment>
<feature type="chain" id="PRO_0000334012" description="Cell division protein SepF">
    <location>
        <begin position="1"/>
        <end position="143"/>
    </location>
</feature>
<gene>
    <name evidence="1" type="primary">sepF</name>
    <name type="ordered locus">GTNG_0997</name>
</gene>
<dbReference type="EMBL" id="CP000557">
    <property type="protein sequence ID" value="ABO66375.1"/>
    <property type="status" value="ALT_INIT"/>
    <property type="molecule type" value="Genomic_DNA"/>
</dbReference>
<dbReference type="RefSeq" id="WP_008878669.1">
    <property type="nucleotide sequence ID" value="NC_009328.1"/>
</dbReference>
<dbReference type="SMR" id="A4IM21"/>
<dbReference type="GeneID" id="87621410"/>
<dbReference type="KEGG" id="gtn:GTNG_0997"/>
<dbReference type="eggNOG" id="COG1799">
    <property type="taxonomic scope" value="Bacteria"/>
</dbReference>
<dbReference type="HOGENOM" id="CLU_078499_4_1_9"/>
<dbReference type="Proteomes" id="UP000001578">
    <property type="component" value="Chromosome"/>
</dbReference>
<dbReference type="GO" id="GO:0005737">
    <property type="term" value="C:cytoplasm"/>
    <property type="evidence" value="ECO:0007669"/>
    <property type="project" value="UniProtKB-SubCell"/>
</dbReference>
<dbReference type="GO" id="GO:0000917">
    <property type="term" value="P:division septum assembly"/>
    <property type="evidence" value="ECO:0007669"/>
    <property type="project" value="UniProtKB-KW"/>
</dbReference>
<dbReference type="GO" id="GO:0043093">
    <property type="term" value="P:FtsZ-dependent cytokinesis"/>
    <property type="evidence" value="ECO:0007669"/>
    <property type="project" value="UniProtKB-UniRule"/>
</dbReference>
<dbReference type="Gene3D" id="3.30.110.150">
    <property type="entry name" value="SepF-like protein"/>
    <property type="match status" value="1"/>
</dbReference>
<dbReference type="HAMAP" id="MF_01197">
    <property type="entry name" value="SepF"/>
    <property type="match status" value="1"/>
</dbReference>
<dbReference type="InterPro" id="IPR023052">
    <property type="entry name" value="Cell_div_SepF"/>
</dbReference>
<dbReference type="InterPro" id="IPR007561">
    <property type="entry name" value="Cell_div_SepF/SepF-rel"/>
</dbReference>
<dbReference type="InterPro" id="IPR038594">
    <property type="entry name" value="SepF-like_sf"/>
</dbReference>
<dbReference type="PANTHER" id="PTHR35798">
    <property type="entry name" value="CELL DIVISION PROTEIN SEPF"/>
    <property type="match status" value="1"/>
</dbReference>
<dbReference type="PANTHER" id="PTHR35798:SF1">
    <property type="entry name" value="CELL DIVISION PROTEIN SEPF"/>
    <property type="match status" value="1"/>
</dbReference>
<dbReference type="Pfam" id="PF04472">
    <property type="entry name" value="SepF"/>
    <property type="match status" value="1"/>
</dbReference>
<name>SEPF_GEOTN</name>
<reference key="1">
    <citation type="journal article" date="2007" name="Proc. Natl. Acad. Sci. U.S.A.">
        <title>Genome and proteome of long-chain alkane degrading Geobacillus thermodenitrificans NG80-2 isolated from a deep-subsurface oil reservoir.</title>
        <authorList>
            <person name="Feng L."/>
            <person name="Wang W."/>
            <person name="Cheng J."/>
            <person name="Ren Y."/>
            <person name="Zhao G."/>
            <person name="Gao C."/>
            <person name="Tang Y."/>
            <person name="Liu X."/>
            <person name="Han W."/>
            <person name="Peng X."/>
            <person name="Liu R."/>
            <person name="Wang L."/>
        </authorList>
    </citation>
    <scope>NUCLEOTIDE SEQUENCE [LARGE SCALE GENOMIC DNA]</scope>
    <source>
        <strain>NG80-2</strain>
    </source>
</reference>
<protein>
    <recommendedName>
        <fullName evidence="1">Cell division protein SepF</fullName>
    </recommendedName>
</protein>
<keyword id="KW-0131">Cell cycle</keyword>
<keyword id="KW-0132">Cell division</keyword>
<keyword id="KW-0963">Cytoplasm</keyword>
<keyword id="KW-0717">Septation</keyword>
<organism>
    <name type="scientific">Geobacillus thermodenitrificans (strain NG80-2)</name>
    <dbReference type="NCBI Taxonomy" id="420246"/>
    <lineage>
        <taxon>Bacteria</taxon>
        <taxon>Bacillati</taxon>
        <taxon>Bacillota</taxon>
        <taxon>Bacilli</taxon>
        <taxon>Bacillales</taxon>
        <taxon>Anoxybacillaceae</taxon>
        <taxon>Geobacillus</taxon>
    </lineage>
</organism>
<evidence type="ECO:0000255" key="1">
    <source>
        <dbReference type="HAMAP-Rule" id="MF_01197"/>
    </source>
</evidence>
<evidence type="ECO:0000305" key="2"/>
<accession>A4IM21</accession>
<proteinExistence type="inferred from homology"/>